<keyword id="KW-0408">Iron</keyword>
<keyword id="KW-0411">Iron-sulfur</keyword>
<keyword id="KW-0479">Metal-binding</keyword>
<comment type="function">
    <text evidence="1">Required for insertion of 4Fe-4S clusters.</text>
</comment>
<comment type="cofactor">
    <cofactor evidence="1">
        <name>iron-sulfur cluster</name>
        <dbReference type="ChEBI" id="CHEBI:30408"/>
    </cofactor>
    <text evidence="1">Binds 1 iron-sulfur cluster per subunit.</text>
</comment>
<comment type="subunit">
    <text evidence="1">Homodimer.</text>
</comment>
<comment type="similarity">
    <text evidence="1">Belongs to the HesB/IscA family.</text>
</comment>
<accession>Q475T0</accession>
<organism>
    <name type="scientific">Cupriavidus pinatubonensis (strain JMP 134 / LMG 1197)</name>
    <name type="common">Cupriavidus necator (strain JMP 134)</name>
    <dbReference type="NCBI Taxonomy" id="264198"/>
    <lineage>
        <taxon>Bacteria</taxon>
        <taxon>Pseudomonadati</taxon>
        <taxon>Pseudomonadota</taxon>
        <taxon>Betaproteobacteria</taxon>
        <taxon>Burkholderiales</taxon>
        <taxon>Burkholderiaceae</taxon>
        <taxon>Cupriavidus</taxon>
    </lineage>
</organism>
<gene>
    <name evidence="1" type="primary">erpA</name>
    <name type="ordered locus">Reut_A0471</name>
</gene>
<dbReference type="EMBL" id="CP000090">
    <property type="protein sequence ID" value="AAZ59853.1"/>
    <property type="molecule type" value="Genomic_DNA"/>
</dbReference>
<dbReference type="SMR" id="Q475T0"/>
<dbReference type="STRING" id="264198.Reut_A0471"/>
<dbReference type="KEGG" id="reu:Reut_A0471"/>
<dbReference type="eggNOG" id="COG0316">
    <property type="taxonomic scope" value="Bacteria"/>
</dbReference>
<dbReference type="HOGENOM" id="CLU_069054_5_3_4"/>
<dbReference type="OrthoDB" id="9801228at2"/>
<dbReference type="GO" id="GO:0051537">
    <property type="term" value="F:2 iron, 2 sulfur cluster binding"/>
    <property type="evidence" value="ECO:0007669"/>
    <property type="project" value="TreeGrafter"/>
</dbReference>
<dbReference type="GO" id="GO:0051539">
    <property type="term" value="F:4 iron, 4 sulfur cluster binding"/>
    <property type="evidence" value="ECO:0007669"/>
    <property type="project" value="TreeGrafter"/>
</dbReference>
<dbReference type="GO" id="GO:0005506">
    <property type="term" value="F:iron ion binding"/>
    <property type="evidence" value="ECO:0007669"/>
    <property type="project" value="UniProtKB-UniRule"/>
</dbReference>
<dbReference type="GO" id="GO:0016226">
    <property type="term" value="P:iron-sulfur cluster assembly"/>
    <property type="evidence" value="ECO:0007669"/>
    <property type="project" value="UniProtKB-UniRule"/>
</dbReference>
<dbReference type="FunFam" id="2.60.300.12:FF:000002">
    <property type="entry name" value="Iron-sulfur cluster insertion protein ErpA"/>
    <property type="match status" value="1"/>
</dbReference>
<dbReference type="Gene3D" id="2.60.300.12">
    <property type="entry name" value="HesB-like domain"/>
    <property type="match status" value="1"/>
</dbReference>
<dbReference type="HAMAP" id="MF_01380">
    <property type="entry name" value="Fe_S_insert_ErpA"/>
    <property type="match status" value="1"/>
</dbReference>
<dbReference type="InterPro" id="IPR000361">
    <property type="entry name" value="FeS_biogenesis"/>
</dbReference>
<dbReference type="InterPro" id="IPR016092">
    <property type="entry name" value="FeS_cluster_insertion"/>
</dbReference>
<dbReference type="InterPro" id="IPR017870">
    <property type="entry name" value="FeS_cluster_insertion_CS"/>
</dbReference>
<dbReference type="InterPro" id="IPR023063">
    <property type="entry name" value="FeS_cluster_insertion_RrpA"/>
</dbReference>
<dbReference type="InterPro" id="IPR035903">
    <property type="entry name" value="HesB-like_dom_sf"/>
</dbReference>
<dbReference type="NCBIfam" id="TIGR00049">
    <property type="entry name" value="iron-sulfur cluster assembly accessory protein"/>
    <property type="match status" value="1"/>
</dbReference>
<dbReference type="NCBIfam" id="NF010147">
    <property type="entry name" value="PRK13623.1"/>
    <property type="match status" value="1"/>
</dbReference>
<dbReference type="PANTHER" id="PTHR43011">
    <property type="entry name" value="IRON-SULFUR CLUSTER ASSEMBLY 2 HOMOLOG, MITOCHONDRIAL"/>
    <property type="match status" value="1"/>
</dbReference>
<dbReference type="PANTHER" id="PTHR43011:SF1">
    <property type="entry name" value="IRON-SULFUR CLUSTER ASSEMBLY 2 HOMOLOG, MITOCHONDRIAL"/>
    <property type="match status" value="1"/>
</dbReference>
<dbReference type="Pfam" id="PF01521">
    <property type="entry name" value="Fe-S_biosyn"/>
    <property type="match status" value="1"/>
</dbReference>
<dbReference type="SUPFAM" id="SSF89360">
    <property type="entry name" value="HesB-like domain"/>
    <property type="match status" value="1"/>
</dbReference>
<dbReference type="PROSITE" id="PS01152">
    <property type="entry name" value="HESB"/>
    <property type="match status" value="1"/>
</dbReference>
<proteinExistence type="inferred from homology"/>
<reference key="1">
    <citation type="journal article" date="2010" name="PLoS ONE">
        <title>The complete multipartite genome sequence of Cupriavidus necator JMP134, a versatile pollutant degrader.</title>
        <authorList>
            <person name="Lykidis A."/>
            <person name="Perez-Pantoja D."/>
            <person name="Ledger T."/>
            <person name="Mavromatis K."/>
            <person name="Anderson I.J."/>
            <person name="Ivanova N.N."/>
            <person name="Hooper S.D."/>
            <person name="Lapidus A."/>
            <person name="Lucas S."/>
            <person name="Gonzalez B."/>
            <person name="Kyrpides N.C."/>
        </authorList>
    </citation>
    <scope>NUCLEOTIDE SEQUENCE [LARGE SCALE GENOMIC DNA]</scope>
    <source>
        <strain>JMP134 / LMG 1197</strain>
    </source>
</reference>
<protein>
    <recommendedName>
        <fullName evidence="1">Putative iron-sulfur cluster insertion protein ErpA</fullName>
    </recommendedName>
</protein>
<sequence length="122" mass="13138">MNAVAEAPVTEDVPAPFVFTDSAADKVKQLIEEEGNAELKLRVFVQGGGCSGFQYGFTFDEEVNEDDTTMVKNGVTLLIDSMSYQYLVGAEIDYKEDINGAQFVIKNPNASTTCGCGSSFSV</sequence>
<feature type="chain" id="PRO_0000311537" description="Putative iron-sulfur cluster insertion protein ErpA">
    <location>
        <begin position="1"/>
        <end position="122"/>
    </location>
</feature>
<feature type="binding site" evidence="1">
    <location>
        <position position="50"/>
    </location>
    <ligand>
        <name>iron-sulfur cluster</name>
        <dbReference type="ChEBI" id="CHEBI:30408"/>
    </ligand>
</feature>
<feature type="binding site" evidence="1">
    <location>
        <position position="114"/>
    </location>
    <ligand>
        <name>iron-sulfur cluster</name>
        <dbReference type="ChEBI" id="CHEBI:30408"/>
    </ligand>
</feature>
<feature type="binding site" evidence="1">
    <location>
        <position position="116"/>
    </location>
    <ligand>
        <name>iron-sulfur cluster</name>
        <dbReference type="ChEBI" id="CHEBI:30408"/>
    </ligand>
</feature>
<evidence type="ECO:0000255" key="1">
    <source>
        <dbReference type="HAMAP-Rule" id="MF_01380"/>
    </source>
</evidence>
<name>ERPA_CUPPJ</name>